<reference key="1">
    <citation type="journal article" date="2002" name="Nucleic Acids Res.">
        <title>Genome sequence of Shigella flexneri 2a: insights into pathogenicity through comparison with genomes of Escherichia coli K12 and O157.</title>
        <authorList>
            <person name="Jin Q."/>
            <person name="Yuan Z."/>
            <person name="Xu J."/>
            <person name="Wang Y."/>
            <person name="Shen Y."/>
            <person name="Lu W."/>
            <person name="Wang J."/>
            <person name="Liu H."/>
            <person name="Yang J."/>
            <person name="Yang F."/>
            <person name="Zhang X."/>
            <person name="Zhang J."/>
            <person name="Yang G."/>
            <person name="Wu H."/>
            <person name="Qu D."/>
            <person name="Dong J."/>
            <person name="Sun L."/>
            <person name="Xue Y."/>
            <person name="Zhao A."/>
            <person name="Gao Y."/>
            <person name="Zhu J."/>
            <person name="Kan B."/>
            <person name="Ding K."/>
            <person name="Chen S."/>
            <person name="Cheng H."/>
            <person name="Yao Z."/>
            <person name="He B."/>
            <person name="Chen R."/>
            <person name="Ma D."/>
            <person name="Qiang B."/>
            <person name="Wen Y."/>
            <person name="Hou Y."/>
            <person name="Yu J."/>
        </authorList>
    </citation>
    <scope>NUCLEOTIDE SEQUENCE [LARGE SCALE GENOMIC DNA]</scope>
    <source>
        <strain>301 / Serotype 2a</strain>
    </source>
</reference>
<reference key="2">
    <citation type="journal article" date="2003" name="Infect. Immun.">
        <title>Complete genome sequence and comparative genomics of Shigella flexneri serotype 2a strain 2457T.</title>
        <authorList>
            <person name="Wei J."/>
            <person name="Goldberg M.B."/>
            <person name="Burland V."/>
            <person name="Venkatesan M.M."/>
            <person name="Deng W."/>
            <person name="Fournier G."/>
            <person name="Mayhew G.F."/>
            <person name="Plunkett G. III"/>
            <person name="Rose D.J."/>
            <person name="Darling A."/>
            <person name="Mau B."/>
            <person name="Perna N.T."/>
            <person name="Payne S.M."/>
            <person name="Runyen-Janecky L.J."/>
            <person name="Zhou S."/>
            <person name="Schwartz D.C."/>
            <person name="Blattner F.R."/>
        </authorList>
    </citation>
    <scope>NUCLEOTIDE SEQUENCE [LARGE SCALE GENOMIC DNA]</scope>
    <source>
        <strain>ATCC 700930 / 2457T / Serotype 2a</strain>
    </source>
</reference>
<protein>
    <recommendedName>
        <fullName evidence="1">Methionine import ATP-binding protein MetN</fullName>
        <ecNumber evidence="1">7.4.2.11</ecNumber>
    </recommendedName>
</protein>
<organism>
    <name type="scientific">Shigella flexneri</name>
    <dbReference type="NCBI Taxonomy" id="623"/>
    <lineage>
        <taxon>Bacteria</taxon>
        <taxon>Pseudomonadati</taxon>
        <taxon>Pseudomonadota</taxon>
        <taxon>Gammaproteobacteria</taxon>
        <taxon>Enterobacterales</taxon>
        <taxon>Enterobacteriaceae</taxon>
        <taxon>Shigella</taxon>
    </lineage>
</organism>
<feature type="chain" id="PRO_0000270384" description="Methionine import ATP-binding protein MetN">
    <location>
        <begin position="1"/>
        <end position="343"/>
    </location>
</feature>
<feature type="domain" description="ABC transporter" evidence="1">
    <location>
        <begin position="2"/>
        <end position="241"/>
    </location>
</feature>
<feature type="binding site" evidence="1">
    <location>
        <begin position="38"/>
        <end position="45"/>
    </location>
    <ligand>
        <name>ATP</name>
        <dbReference type="ChEBI" id="CHEBI:30616"/>
    </ligand>
</feature>
<feature type="sequence conflict" description="In Ref. 2; AAP15732." evidence="2" ref="2">
    <original>R</original>
    <variation>L</variation>
    <location>
        <position position="26"/>
    </location>
</feature>
<dbReference type="EC" id="7.4.2.11" evidence="1"/>
<dbReference type="EMBL" id="AE005674">
    <property type="protein sequence ID" value="AAN41852.1"/>
    <property type="molecule type" value="Genomic_DNA"/>
</dbReference>
<dbReference type="EMBL" id="AE014073">
    <property type="protein sequence ID" value="AAP15732.1"/>
    <property type="molecule type" value="Genomic_DNA"/>
</dbReference>
<dbReference type="RefSeq" id="NP_706145.1">
    <property type="nucleotide sequence ID" value="NC_004337.2"/>
</dbReference>
<dbReference type="RefSeq" id="WP_000594013.1">
    <property type="nucleotide sequence ID" value="NZ_CP123365.1"/>
</dbReference>
<dbReference type="SMR" id="Q83MC5"/>
<dbReference type="STRING" id="198214.SF0190"/>
<dbReference type="PaxDb" id="198214-SF0190"/>
<dbReference type="GeneID" id="1024446"/>
<dbReference type="KEGG" id="sfl:SF0190"/>
<dbReference type="KEGG" id="sfx:S0192"/>
<dbReference type="PATRIC" id="fig|198214.7.peg.213"/>
<dbReference type="HOGENOM" id="CLU_000604_1_3_6"/>
<dbReference type="Proteomes" id="UP000001006">
    <property type="component" value="Chromosome"/>
</dbReference>
<dbReference type="Proteomes" id="UP000002673">
    <property type="component" value="Chromosome"/>
</dbReference>
<dbReference type="GO" id="GO:0009276">
    <property type="term" value="C:Gram-negative-bacterium-type cell wall"/>
    <property type="evidence" value="ECO:0007669"/>
    <property type="project" value="InterPro"/>
</dbReference>
<dbReference type="GO" id="GO:0005886">
    <property type="term" value="C:plasma membrane"/>
    <property type="evidence" value="ECO:0007669"/>
    <property type="project" value="UniProtKB-SubCell"/>
</dbReference>
<dbReference type="GO" id="GO:0033232">
    <property type="term" value="F:ABC-type D-methionine transporter activity"/>
    <property type="evidence" value="ECO:0007669"/>
    <property type="project" value="UniProtKB-EC"/>
</dbReference>
<dbReference type="GO" id="GO:0005524">
    <property type="term" value="F:ATP binding"/>
    <property type="evidence" value="ECO:0007669"/>
    <property type="project" value="UniProtKB-KW"/>
</dbReference>
<dbReference type="GO" id="GO:0016887">
    <property type="term" value="F:ATP hydrolysis activity"/>
    <property type="evidence" value="ECO:0007669"/>
    <property type="project" value="InterPro"/>
</dbReference>
<dbReference type="CDD" id="cd03258">
    <property type="entry name" value="ABC_MetN_methionine_transporter"/>
    <property type="match status" value="1"/>
</dbReference>
<dbReference type="FunFam" id="3.30.70.260:FF:000014">
    <property type="entry name" value="Methionine import ATP-binding protein MetN"/>
    <property type="match status" value="1"/>
</dbReference>
<dbReference type="FunFam" id="3.40.50.300:FF:000233">
    <property type="entry name" value="Methionine import ATP-binding protein MetN"/>
    <property type="match status" value="1"/>
</dbReference>
<dbReference type="Gene3D" id="3.30.70.260">
    <property type="match status" value="1"/>
</dbReference>
<dbReference type="Gene3D" id="3.40.50.300">
    <property type="entry name" value="P-loop containing nucleotide triphosphate hydrolases"/>
    <property type="match status" value="1"/>
</dbReference>
<dbReference type="InterPro" id="IPR003593">
    <property type="entry name" value="AAA+_ATPase"/>
</dbReference>
<dbReference type="InterPro" id="IPR012692">
    <property type="entry name" value="ABC_MetN_proteobac"/>
</dbReference>
<dbReference type="InterPro" id="IPR003439">
    <property type="entry name" value="ABC_transporter-like_ATP-bd"/>
</dbReference>
<dbReference type="InterPro" id="IPR017871">
    <property type="entry name" value="ABC_transporter-like_CS"/>
</dbReference>
<dbReference type="InterPro" id="IPR045865">
    <property type="entry name" value="ACT-like_dom_sf"/>
</dbReference>
<dbReference type="InterPro" id="IPR041701">
    <property type="entry name" value="MetN_ABC"/>
</dbReference>
<dbReference type="InterPro" id="IPR050086">
    <property type="entry name" value="MetN_ABC_transporter-like"/>
</dbReference>
<dbReference type="InterPro" id="IPR018449">
    <property type="entry name" value="NIL_domain"/>
</dbReference>
<dbReference type="InterPro" id="IPR027417">
    <property type="entry name" value="P-loop_NTPase"/>
</dbReference>
<dbReference type="NCBIfam" id="TIGR02314">
    <property type="entry name" value="ABC_MetN"/>
    <property type="match status" value="1"/>
</dbReference>
<dbReference type="PANTHER" id="PTHR43166">
    <property type="entry name" value="AMINO ACID IMPORT ATP-BINDING PROTEIN"/>
    <property type="match status" value="1"/>
</dbReference>
<dbReference type="PANTHER" id="PTHR43166:SF30">
    <property type="entry name" value="METHIONINE IMPORT ATP-BINDING PROTEIN METN"/>
    <property type="match status" value="1"/>
</dbReference>
<dbReference type="Pfam" id="PF00005">
    <property type="entry name" value="ABC_tran"/>
    <property type="match status" value="1"/>
</dbReference>
<dbReference type="Pfam" id="PF09383">
    <property type="entry name" value="NIL"/>
    <property type="match status" value="1"/>
</dbReference>
<dbReference type="SMART" id="SM00382">
    <property type="entry name" value="AAA"/>
    <property type="match status" value="1"/>
</dbReference>
<dbReference type="SMART" id="SM00930">
    <property type="entry name" value="NIL"/>
    <property type="match status" value="1"/>
</dbReference>
<dbReference type="SUPFAM" id="SSF55021">
    <property type="entry name" value="ACT-like"/>
    <property type="match status" value="1"/>
</dbReference>
<dbReference type="SUPFAM" id="SSF52540">
    <property type="entry name" value="P-loop containing nucleoside triphosphate hydrolases"/>
    <property type="match status" value="1"/>
</dbReference>
<dbReference type="PROSITE" id="PS00211">
    <property type="entry name" value="ABC_TRANSPORTER_1"/>
    <property type="match status" value="1"/>
</dbReference>
<dbReference type="PROSITE" id="PS50893">
    <property type="entry name" value="ABC_TRANSPORTER_2"/>
    <property type="match status" value="1"/>
</dbReference>
<dbReference type="PROSITE" id="PS51264">
    <property type="entry name" value="METN"/>
    <property type="match status" value="1"/>
</dbReference>
<accession>Q83MC5</accession>
<accession>Q7UDQ3</accession>
<proteinExistence type="inferred from homology"/>
<name>METN_SHIFL</name>
<comment type="function">
    <text evidence="1">Part of the ABC transporter complex MetNIQ involved in methionine import. Responsible for energy coupling to the transport system.</text>
</comment>
<comment type="catalytic activity">
    <reaction evidence="1">
        <text>L-methionine(out) + ATP + H2O = L-methionine(in) + ADP + phosphate + H(+)</text>
        <dbReference type="Rhea" id="RHEA:29779"/>
        <dbReference type="ChEBI" id="CHEBI:15377"/>
        <dbReference type="ChEBI" id="CHEBI:15378"/>
        <dbReference type="ChEBI" id="CHEBI:30616"/>
        <dbReference type="ChEBI" id="CHEBI:43474"/>
        <dbReference type="ChEBI" id="CHEBI:57844"/>
        <dbReference type="ChEBI" id="CHEBI:456216"/>
        <dbReference type="EC" id="7.4.2.11"/>
    </reaction>
</comment>
<comment type="catalytic activity">
    <reaction evidence="1">
        <text>D-methionine(out) + ATP + H2O = D-methionine(in) + ADP + phosphate + H(+)</text>
        <dbReference type="Rhea" id="RHEA:29767"/>
        <dbReference type="ChEBI" id="CHEBI:15377"/>
        <dbReference type="ChEBI" id="CHEBI:15378"/>
        <dbReference type="ChEBI" id="CHEBI:30616"/>
        <dbReference type="ChEBI" id="CHEBI:43474"/>
        <dbReference type="ChEBI" id="CHEBI:57932"/>
        <dbReference type="ChEBI" id="CHEBI:456216"/>
        <dbReference type="EC" id="7.4.2.11"/>
    </reaction>
</comment>
<comment type="subunit">
    <text evidence="1">The complex is composed of two ATP-binding proteins (MetN), two transmembrane proteins (MetI) and a solute-binding protein (MetQ).</text>
</comment>
<comment type="subcellular location">
    <subcellularLocation>
        <location evidence="1">Cell inner membrane</location>
        <topology evidence="1">Peripheral membrane protein</topology>
    </subcellularLocation>
</comment>
<comment type="similarity">
    <text evidence="1">Belongs to the ABC transporter superfamily. Methionine importer (TC 3.A.1.24) family.</text>
</comment>
<gene>
    <name evidence="1" type="primary">metN</name>
    <name type="ordered locus">SF0190</name>
    <name type="ordered locus">S0192</name>
</gene>
<keyword id="KW-0029">Amino-acid transport</keyword>
<keyword id="KW-0067">ATP-binding</keyword>
<keyword id="KW-0997">Cell inner membrane</keyword>
<keyword id="KW-1003">Cell membrane</keyword>
<keyword id="KW-0472">Membrane</keyword>
<keyword id="KW-0547">Nucleotide-binding</keyword>
<keyword id="KW-1185">Reference proteome</keyword>
<keyword id="KW-1278">Translocase</keyword>
<keyword id="KW-0813">Transport</keyword>
<evidence type="ECO:0000255" key="1">
    <source>
        <dbReference type="HAMAP-Rule" id="MF_01719"/>
    </source>
</evidence>
<evidence type="ECO:0000305" key="2"/>
<sequence>MIKLSNITKVFHQGTRTIQALNNVSRHVPAGQIYGVIGASGAGKSTLIRCVNLLERPTEGSVLVDGQELTTLSESELTKARRQIGMIFQHFNLLSSRTVFGNVALPLELDNTPKDEIKRRVTELLSLVGLGDKHDSYPSNLSGGQKQRVAIARALASNPKVLLCDEATSALDPATTRSILELLKDINRRLGLTILLITHEMDVVKRICDCVAVISNGELIEQDTVSEVFSHPKTPLAQKFIQSTLHLDIPEDYQERLQTEPFTDCVPMLRLEFTGQSVDAPLLSETARRFNVNNNIISAQMDYAGGVKFGIMLTEMHGTQQDTQAAIAWLQEHHVKVEVLGYV</sequence>